<dbReference type="EC" id="2.1.1.77" evidence="1"/>
<dbReference type="EMBL" id="CP000716">
    <property type="protein sequence ID" value="ABR31524.1"/>
    <property type="molecule type" value="Genomic_DNA"/>
</dbReference>
<dbReference type="RefSeq" id="WP_012057883.1">
    <property type="nucleotide sequence ID" value="NC_009616.1"/>
</dbReference>
<dbReference type="SMR" id="A6LNM3"/>
<dbReference type="STRING" id="391009.Tmel_1682"/>
<dbReference type="KEGG" id="tme:Tmel_1682"/>
<dbReference type="eggNOG" id="COG2518">
    <property type="taxonomic scope" value="Bacteria"/>
</dbReference>
<dbReference type="HOGENOM" id="CLU_055432_2_0_0"/>
<dbReference type="OrthoDB" id="9772751at2"/>
<dbReference type="Proteomes" id="UP000001110">
    <property type="component" value="Chromosome"/>
</dbReference>
<dbReference type="GO" id="GO:0005737">
    <property type="term" value="C:cytoplasm"/>
    <property type="evidence" value="ECO:0007669"/>
    <property type="project" value="UniProtKB-SubCell"/>
</dbReference>
<dbReference type="GO" id="GO:0004719">
    <property type="term" value="F:protein-L-isoaspartate (D-aspartate) O-methyltransferase activity"/>
    <property type="evidence" value="ECO:0007669"/>
    <property type="project" value="UniProtKB-UniRule"/>
</dbReference>
<dbReference type="GO" id="GO:0032259">
    <property type="term" value="P:methylation"/>
    <property type="evidence" value="ECO:0007669"/>
    <property type="project" value="UniProtKB-KW"/>
</dbReference>
<dbReference type="GO" id="GO:0036211">
    <property type="term" value="P:protein modification process"/>
    <property type="evidence" value="ECO:0007669"/>
    <property type="project" value="UniProtKB-UniRule"/>
</dbReference>
<dbReference type="GO" id="GO:0030091">
    <property type="term" value="P:protein repair"/>
    <property type="evidence" value="ECO:0007669"/>
    <property type="project" value="UniProtKB-UniRule"/>
</dbReference>
<dbReference type="CDD" id="cd02440">
    <property type="entry name" value="AdoMet_MTases"/>
    <property type="match status" value="1"/>
</dbReference>
<dbReference type="FunFam" id="3.40.50.150:FF:000010">
    <property type="entry name" value="Protein-L-isoaspartate O-methyltransferase"/>
    <property type="match status" value="1"/>
</dbReference>
<dbReference type="Gene3D" id="3.40.50.150">
    <property type="entry name" value="Vaccinia Virus protein VP39"/>
    <property type="match status" value="1"/>
</dbReference>
<dbReference type="HAMAP" id="MF_00090">
    <property type="entry name" value="PIMT"/>
    <property type="match status" value="1"/>
</dbReference>
<dbReference type="InterPro" id="IPR000682">
    <property type="entry name" value="PCMT"/>
</dbReference>
<dbReference type="InterPro" id="IPR029063">
    <property type="entry name" value="SAM-dependent_MTases_sf"/>
</dbReference>
<dbReference type="NCBIfam" id="TIGR00080">
    <property type="entry name" value="pimt"/>
    <property type="match status" value="1"/>
</dbReference>
<dbReference type="NCBIfam" id="NF001453">
    <property type="entry name" value="PRK00312.1"/>
    <property type="match status" value="1"/>
</dbReference>
<dbReference type="PANTHER" id="PTHR11579">
    <property type="entry name" value="PROTEIN-L-ISOASPARTATE O-METHYLTRANSFERASE"/>
    <property type="match status" value="1"/>
</dbReference>
<dbReference type="PANTHER" id="PTHR11579:SF0">
    <property type="entry name" value="PROTEIN-L-ISOASPARTATE(D-ASPARTATE) O-METHYLTRANSFERASE"/>
    <property type="match status" value="1"/>
</dbReference>
<dbReference type="Pfam" id="PF01135">
    <property type="entry name" value="PCMT"/>
    <property type="match status" value="1"/>
</dbReference>
<dbReference type="SUPFAM" id="SSF53335">
    <property type="entry name" value="S-adenosyl-L-methionine-dependent methyltransferases"/>
    <property type="match status" value="1"/>
</dbReference>
<dbReference type="PROSITE" id="PS01279">
    <property type="entry name" value="PCMT"/>
    <property type="match status" value="1"/>
</dbReference>
<evidence type="ECO:0000255" key="1">
    <source>
        <dbReference type="HAMAP-Rule" id="MF_00090"/>
    </source>
</evidence>
<sequence>MYEHLKRYGVSKNIIEAMNKIDRKYFVPENVKDLAYDDIPLPIGFGQTISAPHMVGIMCKELDLKEKDKVLEIGTGSGYNAAVMSLLVGKSGHIYTIERIKQLYKIATKRFKQFGLTNITCILGDGKEGFEEYAPFDKIVVTCYSKFVPNKLLEQLSDNGILLIPVGDEFVQVLKKIKKINGQISEEDLLHVKFVPLV</sequence>
<comment type="function">
    <text evidence="1">Catalyzes the methyl esterification of L-isoaspartyl residues in peptides and proteins that result from spontaneous decomposition of normal L-aspartyl and L-asparaginyl residues. It plays a role in the repair and/or degradation of damaged proteins.</text>
</comment>
<comment type="catalytic activity">
    <reaction evidence="1">
        <text>[protein]-L-isoaspartate + S-adenosyl-L-methionine = [protein]-L-isoaspartate alpha-methyl ester + S-adenosyl-L-homocysteine</text>
        <dbReference type="Rhea" id="RHEA:12705"/>
        <dbReference type="Rhea" id="RHEA-COMP:12143"/>
        <dbReference type="Rhea" id="RHEA-COMP:12144"/>
        <dbReference type="ChEBI" id="CHEBI:57856"/>
        <dbReference type="ChEBI" id="CHEBI:59789"/>
        <dbReference type="ChEBI" id="CHEBI:90596"/>
        <dbReference type="ChEBI" id="CHEBI:90598"/>
        <dbReference type="EC" id="2.1.1.77"/>
    </reaction>
</comment>
<comment type="subcellular location">
    <subcellularLocation>
        <location evidence="1">Cytoplasm</location>
    </subcellularLocation>
</comment>
<comment type="similarity">
    <text evidence="1">Belongs to the methyltransferase superfamily. L-isoaspartyl/D-aspartyl protein methyltransferase family.</text>
</comment>
<accession>A6LNM3</accession>
<keyword id="KW-0963">Cytoplasm</keyword>
<keyword id="KW-0489">Methyltransferase</keyword>
<keyword id="KW-0949">S-adenosyl-L-methionine</keyword>
<keyword id="KW-0808">Transferase</keyword>
<organism>
    <name type="scientific">Thermosipho melanesiensis (strain DSM 12029 / CIP 104789 / BI429)</name>
    <dbReference type="NCBI Taxonomy" id="391009"/>
    <lineage>
        <taxon>Bacteria</taxon>
        <taxon>Thermotogati</taxon>
        <taxon>Thermotogota</taxon>
        <taxon>Thermotogae</taxon>
        <taxon>Thermotogales</taxon>
        <taxon>Fervidobacteriaceae</taxon>
        <taxon>Thermosipho</taxon>
    </lineage>
</organism>
<reference key="1">
    <citation type="submission" date="2007-05" db="EMBL/GenBank/DDBJ databases">
        <title>Complete sequence of Thermosipho melanesiensis BI429.</title>
        <authorList>
            <consortium name="US DOE Joint Genome Institute"/>
            <person name="Copeland A."/>
            <person name="Lucas S."/>
            <person name="Lapidus A."/>
            <person name="Barry K."/>
            <person name="Glavina del Rio T."/>
            <person name="Dalin E."/>
            <person name="Tice H."/>
            <person name="Pitluck S."/>
            <person name="Chertkov O."/>
            <person name="Brettin T."/>
            <person name="Bruce D."/>
            <person name="Detter J.C."/>
            <person name="Han C."/>
            <person name="Schmutz J."/>
            <person name="Larimer F."/>
            <person name="Land M."/>
            <person name="Hauser L."/>
            <person name="Kyrpides N."/>
            <person name="Mikhailova N."/>
            <person name="Nelson K."/>
            <person name="Gogarten J.P."/>
            <person name="Noll K."/>
            <person name="Richardson P."/>
        </authorList>
    </citation>
    <scope>NUCLEOTIDE SEQUENCE [LARGE SCALE GENOMIC DNA]</scope>
    <source>
        <strain>DSM 12029 / CIP 104789 / BI429</strain>
    </source>
</reference>
<proteinExistence type="inferred from homology"/>
<gene>
    <name evidence="1" type="primary">pcm</name>
    <name type="ordered locus">Tmel_1682</name>
</gene>
<name>PIMT_THEM4</name>
<protein>
    <recommendedName>
        <fullName evidence="1">Protein-L-isoaspartate O-methyltransferase</fullName>
        <ecNumber evidence="1">2.1.1.77</ecNumber>
    </recommendedName>
    <alternativeName>
        <fullName evidence="1">L-isoaspartyl protein carboxyl methyltransferase</fullName>
    </alternativeName>
    <alternativeName>
        <fullName evidence="1">Protein L-isoaspartyl methyltransferase</fullName>
    </alternativeName>
    <alternativeName>
        <fullName evidence="1">Protein-beta-aspartate methyltransferase</fullName>
        <shortName evidence="1">PIMT</shortName>
    </alternativeName>
</protein>
<feature type="chain" id="PRO_0000351947" description="Protein-L-isoaspartate O-methyltransferase">
    <location>
        <begin position="1"/>
        <end position="198"/>
    </location>
</feature>
<feature type="active site" evidence="1">
    <location>
        <position position="50"/>
    </location>
</feature>